<keyword id="KW-0963">Cytoplasm</keyword>
<keyword id="KW-0489">Methyltransferase</keyword>
<keyword id="KW-0698">rRNA processing</keyword>
<keyword id="KW-0949">S-adenosyl-L-methionine</keyword>
<keyword id="KW-0808">Transferase</keyword>
<organism>
    <name type="scientific">Brucella melitensis biotype 1 (strain ATCC 23456 / CCUG 17765 / NCTC 10094 / 16M)</name>
    <dbReference type="NCBI Taxonomy" id="224914"/>
    <lineage>
        <taxon>Bacteria</taxon>
        <taxon>Pseudomonadati</taxon>
        <taxon>Pseudomonadota</taxon>
        <taxon>Alphaproteobacteria</taxon>
        <taxon>Hyphomicrobiales</taxon>
        <taxon>Brucellaceae</taxon>
        <taxon>Brucella/Ochrobactrum group</taxon>
        <taxon>Brucella</taxon>
    </lineage>
</organism>
<name>RLME_BRUME</name>
<reference key="1">
    <citation type="journal article" date="2002" name="Proc. Natl. Acad. Sci. U.S.A.">
        <title>The genome sequence of the facultative intracellular pathogen Brucella melitensis.</title>
        <authorList>
            <person name="DelVecchio V.G."/>
            <person name="Kapatral V."/>
            <person name="Redkar R.J."/>
            <person name="Patra G."/>
            <person name="Mujer C."/>
            <person name="Los T."/>
            <person name="Ivanova N."/>
            <person name="Anderson I."/>
            <person name="Bhattacharyya A."/>
            <person name="Lykidis A."/>
            <person name="Reznik G."/>
            <person name="Jablonski L."/>
            <person name="Larsen N."/>
            <person name="D'Souza M."/>
            <person name="Bernal A."/>
            <person name="Mazur M."/>
            <person name="Goltsman E."/>
            <person name="Selkov E."/>
            <person name="Elzer P.H."/>
            <person name="Hagius S."/>
            <person name="O'Callaghan D."/>
            <person name="Letesson J.-J."/>
            <person name="Haselkorn R."/>
            <person name="Kyrpides N.C."/>
            <person name="Overbeek R."/>
        </authorList>
    </citation>
    <scope>NUCLEOTIDE SEQUENCE [LARGE SCALE GENOMIC DNA]</scope>
    <source>
        <strain>ATCC 23456 / CCUG 17765 / NCTC 10094 / 16M</strain>
    </source>
</reference>
<accession>Q8YCD5</accession>
<evidence type="ECO:0000255" key="1">
    <source>
        <dbReference type="HAMAP-Rule" id="MF_01547"/>
    </source>
</evidence>
<evidence type="ECO:0000256" key="2">
    <source>
        <dbReference type="SAM" id="MobiDB-lite"/>
    </source>
</evidence>
<gene>
    <name evidence="1" type="primary">rlmE</name>
    <name evidence="1" type="synonym">ftsJ</name>
    <name evidence="1" type="synonym">rrmJ</name>
    <name type="ordered locus">BMEII0597</name>
</gene>
<dbReference type="EC" id="2.1.1.166" evidence="1"/>
<dbReference type="EMBL" id="AE008918">
    <property type="protein sequence ID" value="AAL53839.1"/>
    <property type="molecule type" value="Genomic_DNA"/>
</dbReference>
<dbReference type="PIR" id="AD3584">
    <property type="entry name" value="AD3584"/>
</dbReference>
<dbReference type="RefSeq" id="WP_002965955.1">
    <property type="nucleotide sequence ID" value="NZ_GG703779.1"/>
</dbReference>
<dbReference type="SMR" id="Q8YCD5"/>
<dbReference type="KEGG" id="bme:BMEII0597"/>
<dbReference type="KEGG" id="bmel:DK63_2649"/>
<dbReference type="PATRIC" id="fig|224914.52.peg.2777"/>
<dbReference type="eggNOG" id="COG0293">
    <property type="taxonomic scope" value="Bacteria"/>
</dbReference>
<dbReference type="PhylomeDB" id="Q8YCD5"/>
<dbReference type="Proteomes" id="UP000000419">
    <property type="component" value="Chromosome II"/>
</dbReference>
<dbReference type="GO" id="GO:0005737">
    <property type="term" value="C:cytoplasm"/>
    <property type="evidence" value="ECO:0007669"/>
    <property type="project" value="UniProtKB-SubCell"/>
</dbReference>
<dbReference type="GO" id="GO:0008650">
    <property type="term" value="F:rRNA (uridine-2'-O-)-methyltransferase activity"/>
    <property type="evidence" value="ECO:0007669"/>
    <property type="project" value="UniProtKB-UniRule"/>
</dbReference>
<dbReference type="Gene3D" id="3.40.50.150">
    <property type="entry name" value="Vaccinia Virus protein VP39"/>
    <property type="match status" value="1"/>
</dbReference>
<dbReference type="HAMAP" id="MF_01547">
    <property type="entry name" value="RNA_methyltr_E"/>
    <property type="match status" value="1"/>
</dbReference>
<dbReference type="InterPro" id="IPR050082">
    <property type="entry name" value="RNA_methyltr_RlmE"/>
</dbReference>
<dbReference type="InterPro" id="IPR002877">
    <property type="entry name" value="RNA_MeTrfase_FtsJ_dom"/>
</dbReference>
<dbReference type="InterPro" id="IPR015507">
    <property type="entry name" value="rRNA-MeTfrase_E"/>
</dbReference>
<dbReference type="InterPro" id="IPR029063">
    <property type="entry name" value="SAM-dependent_MTases_sf"/>
</dbReference>
<dbReference type="PANTHER" id="PTHR10920">
    <property type="entry name" value="RIBOSOMAL RNA METHYLTRANSFERASE"/>
    <property type="match status" value="1"/>
</dbReference>
<dbReference type="PANTHER" id="PTHR10920:SF18">
    <property type="entry name" value="RRNA METHYLTRANSFERASE 2, MITOCHONDRIAL"/>
    <property type="match status" value="1"/>
</dbReference>
<dbReference type="Pfam" id="PF01728">
    <property type="entry name" value="FtsJ"/>
    <property type="match status" value="1"/>
</dbReference>
<dbReference type="PIRSF" id="PIRSF005461">
    <property type="entry name" value="23S_rRNA_mtase"/>
    <property type="match status" value="1"/>
</dbReference>
<dbReference type="SUPFAM" id="SSF53335">
    <property type="entry name" value="S-adenosyl-L-methionine-dependent methyltransferases"/>
    <property type="match status" value="1"/>
</dbReference>
<comment type="function">
    <text evidence="1">Specifically methylates the uridine in position 2552 of 23S rRNA at the 2'-O position of the ribose in the fully assembled 50S ribosomal subunit.</text>
</comment>
<comment type="catalytic activity">
    <reaction evidence="1">
        <text>uridine(2552) in 23S rRNA + S-adenosyl-L-methionine = 2'-O-methyluridine(2552) in 23S rRNA + S-adenosyl-L-homocysteine + H(+)</text>
        <dbReference type="Rhea" id="RHEA:42720"/>
        <dbReference type="Rhea" id="RHEA-COMP:10202"/>
        <dbReference type="Rhea" id="RHEA-COMP:10203"/>
        <dbReference type="ChEBI" id="CHEBI:15378"/>
        <dbReference type="ChEBI" id="CHEBI:57856"/>
        <dbReference type="ChEBI" id="CHEBI:59789"/>
        <dbReference type="ChEBI" id="CHEBI:65315"/>
        <dbReference type="ChEBI" id="CHEBI:74478"/>
        <dbReference type="EC" id="2.1.1.166"/>
    </reaction>
</comment>
<comment type="subcellular location">
    <subcellularLocation>
        <location evidence="1">Cytoplasm</location>
    </subcellularLocation>
</comment>
<comment type="similarity">
    <text evidence="1">Belongs to the class I-like SAM-binding methyltransferase superfamily. RNA methyltransferase RlmE family.</text>
</comment>
<feature type="chain" id="PRO_0000155479" description="Ribosomal RNA large subunit methyltransferase E">
    <location>
        <begin position="1"/>
        <end position="240"/>
    </location>
</feature>
<feature type="region of interest" description="Disordered" evidence="2">
    <location>
        <begin position="1"/>
        <end position="33"/>
    </location>
</feature>
<feature type="compositionally biased region" description="Gly residues" evidence="2">
    <location>
        <begin position="1"/>
        <end position="20"/>
    </location>
</feature>
<feature type="active site" description="Proton acceptor" evidence="1">
    <location>
        <position position="195"/>
    </location>
</feature>
<feature type="binding site" evidence="1">
    <location>
        <position position="92"/>
    </location>
    <ligand>
        <name>S-adenosyl-L-methionine</name>
        <dbReference type="ChEBI" id="CHEBI:59789"/>
    </ligand>
</feature>
<feature type="binding site" evidence="1">
    <location>
        <position position="94"/>
    </location>
    <ligand>
        <name>S-adenosyl-L-methionine</name>
        <dbReference type="ChEBI" id="CHEBI:59789"/>
    </ligand>
</feature>
<feature type="binding site" evidence="1">
    <location>
        <position position="115"/>
    </location>
    <ligand>
        <name>S-adenosyl-L-methionine</name>
        <dbReference type="ChEBI" id="CHEBI:59789"/>
    </ligand>
</feature>
<feature type="binding site" evidence="1">
    <location>
        <position position="131"/>
    </location>
    <ligand>
        <name>S-adenosyl-L-methionine</name>
        <dbReference type="ChEBI" id="CHEBI:59789"/>
    </ligand>
</feature>
<feature type="binding site" evidence="1">
    <location>
        <position position="155"/>
    </location>
    <ligand>
        <name>S-adenosyl-L-methionine</name>
        <dbReference type="ChEBI" id="CHEBI:59789"/>
    </ligand>
</feature>
<protein>
    <recommendedName>
        <fullName evidence="1">Ribosomal RNA large subunit methyltransferase E</fullName>
        <ecNumber evidence="1">2.1.1.166</ecNumber>
    </recommendedName>
    <alternativeName>
        <fullName evidence="1">23S rRNA Um2552 methyltransferase</fullName>
    </alternativeName>
    <alternativeName>
        <fullName evidence="1">rRNA (uridine-2'-O-)-methyltransferase</fullName>
    </alternativeName>
</protein>
<sequence>MSKAGGNKGGSRTGGRGGAGSSNLHVRVKKKAGTIKESSRRWLERHLNDPYVHKSRQDGYRSRAAYKLIEINDRYNLLKKGQKIIDLGAAPGGWSQIAARIVGSTDENPQVVGIDYLHVDPLPGVILLEMDFLDDEAPQKLMDALGDKPDLVISDMAAPTTGHRRTDHLRTVHLCEVAADFAVSVLKPGGHFLTKTFQGGTENELLALLKQKFRSVHHVKPPASRAESVELYLLARDFKG</sequence>
<proteinExistence type="inferred from homology"/>